<organism>
    <name type="scientific">Edwardsiella ictaluri (strain 93-146)</name>
    <dbReference type="NCBI Taxonomy" id="634503"/>
    <lineage>
        <taxon>Bacteria</taxon>
        <taxon>Pseudomonadati</taxon>
        <taxon>Pseudomonadota</taxon>
        <taxon>Gammaproteobacteria</taxon>
        <taxon>Enterobacterales</taxon>
        <taxon>Hafniaceae</taxon>
        <taxon>Edwardsiella</taxon>
    </lineage>
</organism>
<name>TMAR_EDWI9</name>
<dbReference type="EMBL" id="CP001600">
    <property type="protein sequence ID" value="ACR68518.1"/>
    <property type="molecule type" value="Genomic_DNA"/>
</dbReference>
<dbReference type="RefSeq" id="WP_015870684.1">
    <property type="nucleotide sequence ID" value="NZ_CP169062.1"/>
</dbReference>
<dbReference type="SMR" id="C5BD23"/>
<dbReference type="STRING" id="67780.B6E78_16885"/>
<dbReference type="KEGG" id="eic:NT01EI_1321"/>
<dbReference type="PATRIC" id="fig|634503.3.peg.1194"/>
<dbReference type="HOGENOM" id="CLU_153146_0_0_6"/>
<dbReference type="OrthoDB" id="90485at2"/>
<dbReference type="Proteomes" id="UP000001485">
    <property type="component" value="Chromosome"/>
</dbReference>
<dbReference type="GO" id="GO:0005829">
    <property type="term" value="C:cytosol"/>
    <property type="evidence" value="ECO:0007669"/>
    <property type="project" value="TreeGrafter"/>
</dbReference>
<dbReference type="HAMAP" id="MF_00683">
    <property type="entry name" value="Pole_loc_TmaR"/>
    <property type="match status" value="1"/>
</dbReference>
<dbReference type="InterPro" id="IPR007458">
    <property type="entry name" value="DUF496"/>
</dbReference>
<dbReference type="InterPro" id="IPR053375">
    <property type="entry name" value="UPF0265"/>
</dbReference>
<dbReference type="NCBIfam" id="NF003844">
    <property type="entry name" value="PRK05423.1"/>
    <property type="match status" value="1"/>
</dbReference>
<dbReference type="NCBIfam" id="NF040881">
    <property type="entry name" value="PTS_reg_TmaR"/>
    <property type="match status" value="1"/>
</dbReference>
<dbReference type="PANTHER" id="PTHR39591">
    <property type="entry name" value="UPF0265 PROTEIN YEEX"/>
    <property type="match status" value="1"/>
</dbReference>
<dbReference type="PANTHER" id="PTHR39591:SF1">
    <property type="entry name" value="UPF0265 PROTEIN YEEX"/>
    <property type="match status" value="1"/>
</dbReference>
<dbReference type="Pfam" id="PF04363">
    <property type="entry name" value="DUF496"/>
    <property type="match status" value="1"/>
</dbReference>
<dbReference type="PIRSF" id="PIRSF028773">
    <property type="entry name" value="UCP028773"/>
    <property type="match status" value="1"/>
</dbReference>
<sequence length="110" mass="12975">MENANKPTFQNVLEFVRTFRRKNKLQREIADVEKKIRDNQKRVLLLDNLSDYIKPGMSVEAIQAIIADMRGNYEDRVDEYIIKNADLSKERRDLSKKLKALGEGEYKEEK</sequence>
<evidence type="ECO:0000255" key="1">
    <source>
        <dbReference type="HAMAP-Rule" id="MF_00683"/>
    </source>
</evidence>
<accession>C5BD23</accession>
<protein>
    <recommendedName>
        <fullName evidence="1">Pole-localizer protein TmaR</fullName>
    </recommendedName>
</protein>
<feature type="chain" id="PRO_1000212546" description="Pole-localizer protein TmaR">
    <location>
        <begin position="1"/>
        <end position="110"/>
    </location>
</feature>
<feature type="coiled-coil region" evidence="1">
    <location>
        <begin position="15"/>
        <end position="42"/>
    </location>
</feature>
<gene>
    <name evidence="1" type="primary">tmaR</name>
    <name type="ordered locus">NT01EI_1321</name>
</gene>
<proteinExistence type="inferred from homology"/>
<keyword id="KW-0175">Coiled coil</keyword>
<keyword id="KW-0963">Cytoplasm</keyword>
<comment type="function">
    <text evidence="1">Pole-localizer protein involved in the regulation of several cellular processes.</text>
</comment>
<comment type="subcellular location">
    <subcellularLocation>
        <location evidence="1">Cytoplasm</location>
    </subcellularLocation>
</comment>
<comment type="similarity">
    <text evidence="1">Belongs to the pole-localizer TmaR family.</text>
</comment>
<reference key="1">
    <citation type="submission" date="2009-03" db="EMBL/GenBank/DDBJ databases">
        <title>Complete genome sequence of Edwardsiella ictaluri 93-146.</title>
        <authorList>
            <person name="Williams M.L."/>
            <person name="Gillaspy A.F."/>
            <person name="Dyer D.W."/>
            <person name="Thune R.L."/>
            <person name="Waldbieser G.C."/>
            <person name="Schuster S.C."/>
            <person name="Gipson J."/>
            <person name="Zaitshik J."/>
            <person name="Landry C."/>
            <person name="Lawrence M.L."/>
        </authorList>
    </citation>
    <scope>NUCLEOTIDE SEQUENCE [LARGE SCALE GENOMIC DNA]</scope>
    <source>
        <strain>93-146</strain>
    </source>
</reference>